<accession>O23082</accession>
<accession>F4JHQ4</accession>
<proteinExistence type="inferred from homology"/>
<evidence type="ECO:0000250" key="1">
    <source>
        <dbReference type="UniProtKB" id="O48814"/>
    </source>
</evidence>
<evidence type="ECO:0000255" key="2">
    <source>
        <dbReference type="PROSITE-ProRule" id="PRU00159"/>
    </source>
</evidence>
<evidence type="ECO:0000255" key="3">
    <source>
        <dbReference type="PROSITE-ProRule" id="PRU10027"/>
    </source>
</evidence>
<evidence type="ECO:0000305" key="4"/>
<protein>
    <recommendedName>
        <fullName evidence="4">Cysteine-rich receptor-like protein kinase 44</fullName>
        <shortName evidence="4">Cysteine-rich RLK44</shortName>
        <ecNumber evidence="1">2.7.11.1</ecNumber>
    </recommendedName>
</protein>
<comment type="catalytic activity">
    <reaction evidence="1">
        <text>L-seryl-[protein] + ATP = O-phospho-L-seryl-[protein] + ADP + H(+)</text>
        <dbReference type="Rhea" id="RHEA:17989"/>
        <dbReference type="Rhea" id="RHEA-COMP:9863"/>
        <dbReference type="Rhea" id="RHEA-COMP:11604"/>
        <dbReference type="ChEBI" id="CHEBI:15378"/>
        <dbReference type="ChEBI" id="CHEBI:29999"/>
        <dbReference type="ChEBI" id="CHEBI:30616"/>
        <dbReference type="ChEBI" id="CHEBI:83421"/>
        <dbReference type="ChEBI" id="CHEBI:456216"/>
        <dbReference type="EC" id="2.7.11.1"/>
    </reaction>
</comment>
<comment type="catalytic activity">
    <reaction evidence="1">
        <text>L-threonyl-[protein] + ATP = O-phospho-L-threonyl-[protein] + ADP + H(+)</text>
        <dbReference type="Rhea" id="RHEA:46608"/>
        <dbReference type="Rhea" id="RHEA-COMP:11060"/>
        <dbReference type="Rhea" id="RHEA-COMP:11605"/>
        <dbReference type="ChEBI" id="CHEBI:15378"/>
        <dbReference type="ChEBI" id="CHEBI:30013"/>
        <dbReference type="ChEBI" id="CHEBI:30616"/>
        <dbReference type="ChEBI" id="CHEBI:61977"/>
        <dbReference type="ChEBI" id="CHEBI:456216"/>
        <dbReference type="EC" id="2.7.11.1"/>
    </reaction>
</comment>
<comment type="similarity">
    <text evidence="2">Belongs to the protein kinase superfamily. Ser/Thr protein kinase family. CRK subfamily.</text>
</comment>
<comment type="sequence caution" evidence="4">
    <conflict type="erroneous gene model prediction">
        <sequence resource="EMBL-CDS" id="AAB62862"/>
    </conflict>
</comment>
<comment type="sequence caution" evidence="4">
    <conflict type="erroneous gene model prediction">
        <sequence resource="EMBL-CDS" id="CAB80905"/>
    </conflict>
</comment>
<sequence length="379" mass="43412">MKVDFLVIKVEKLSSLRVFYFFLFFFESKYVEDQKIKDAKLLQLDFDTIRLATNDFSPYNHLGEGGFGAVYKGVLDSGEEIAVKRLSMKSGQGDNEFVNEVSLVAKLQHRNLVRLLGFCFKGEERLLIYEFFKNTSLEKFIFDSDRRMILDWEKRYRIISGVARGLLYLHEDSHFKIIHRDMKASNVLLDDAMNPKIADFGMVKLFNTDQTSQTMFTSKVAGTYGYMAPEYAMSGQFSVKTDVFSFGVLVLEIIKGKKNNWSPEEQSSLFLLSYVWKCWREGEVLNIVDPSLIETRGLSDEIRKCIHIGLLCVQENPGSRPTMASIVRMLNANSFTLPRPLQPAFYSGVVDSSSRDNNHTRNPRIASLNDVTITELDPR</sequence>
<feature type="chain" id="PRO_0000401345" description="Cysteine-rich receptor-like protein kinase 44">
    <location>
        <begin position="1"/>
        <end position="379"/>
    </location>
</feature>
<feature type="domain" description="Protein kinase" evidence="2">
    <location>
        <begin position="56"/>
        <end position="336"/>
    </location>
</feature>
<feature type="active site" description="Proton acceptor" evidence="2 3">
    <location>
        <position position="181"/>
    </location>
</feature>
<feature type="binding site" evidence="2">
    <location>
        <begin position="62"/>
        <end position="70"/>
    </location>
    <ligand>
        <name>ATP</name>
        <dbReference type="ChEBI" id="CHEBI:30616"/>
    </ligand>
</feature>
<feature type="binding site" evidence="2">
    <location>
        <position position="84"/>
    </location>
    <ligand>
        <name>ATP</name>
        <dbReference type="ChEBI" id="CHEBI:30616"/>
    </ligand>
</feature>
<feature type="modified residue" description="Phosphotyrosine" evidence="1">
    <location>
        <position position="129"/>
    </location>
</feature>
<feature type="modified residue" description="Phosphoserine" evidence="1">
    <location>
        <position position="185"/>
    </location>
</feature>
<feature type="modified residue" description="Phosphothreonine" evidence="1">
    <location>
        <position position="223"/>
    </location>
</feature>
<feature type="modified residue" description="Phosphotyrosine" evidence="1">
    <location>
        <position position="231"/>
    </location>
</feature>
<keyword id="KW-0067">ATP-binding</keyword>
<keyword id="KW-0418">Kinase</keyword>
<keyword id="KW-0547">Nucleotide-binding</keyword>
<keyword id="KW-0597">Phosphoprotein</keyword>
<keyword id="KW-1185">Reference proteome</keyword>
<keyword id="KW-0723">Serine/threonine-protein kinase</keyword>
<keyword id="KW-0808">Transferase</keyword>
<organism>
    <name type="scientific">Arabidopsis thaliana</name>
    <name type="common">Mouse-ear cress</name>
    <dbReference type="NCBI Taxonomy" id="3702"/>
    <lineage>
        <taxon>Eukaryota</taxon>
        <taxon>Viridiplantae</taxon>
        <taxon>Streptophyta</taxon>
        <taxon>Embryophyta</taxon>
        <taxon>Tracheophyta</taxon>
        <taxon>Spermatophyta</taxon>
        <taxon>Magnoliopsida</taxon>
        <taxon>eudicotyledons</taxon>
        <taxon>Gunneridae</taxon>
        <taxon>Pentapetalae</taxon>
        <taxon>rosids</taxon>
        <taxon>malvids</taxon>
        <taxon>Brassicales</taxon>
        <taxon>Brassicaceae</taxon>
        <taxon>Camelineae</taxon>
        <taxon>Arabidopsis</taxon>
    </lineage>
</organism>
<gene>
    <name evidence="4" type="primary">CRK44</name>
    <name type="ordered locus">At4g00960</name>
    <name type="ORF">A_TM018A10.19</name>
    <name type="ORF">T18A10.6</name>
</gene>
<name>CRK44_ARATH</name>
<dbReference type="EC" id="2.7.11.1" evidence="1"/>
<dbReference type="EMBL" id="AF013294">
    <property type="protein sequence ID" value="AAB62862.1"/>
    <property type="status" value="ALT_SEQ"/>
    <property type="molecule type" value="Genomic_DNA"/>
</dbReference>
<dbReference type="EMBL" id="AL161491">
    <property type="protein sequence ID" value="CAB80905.1"/>
    <property type="status" value="ALT_SEQ"/>
    <property type="molecule type" value="Genomic_DNA"/>
</dbReference>
<dbReference type="EMBL" id="CP002687">
    <property type="protein sequence ID" value="AEE81961.2"/>
    <property type="molecule type" value="Genomic_DNA"/>
</dbReference>
<dbReference type="PIR" id="T01551">
    <property type="entry name" value="T01551"/>
</dbReference>
<dbReference type="RefSeq" id="NP_001319837.1">
    <property type="nucleotide sequence ID" value="NM_001340287.1"/>
</dbReference>
<dbReference type="SMR" id="O23082"/>
<dbReference type="FunCoup" id="O23082">
    <property type="interactions" value="252"/>
</dbReference>
<dbReference type="STRING" id="3702.O23082"/>
<dbReference type="PaxDb" id="3702-AT4G00960.1"/>
<dbReference type="EnsemblPlants" id="AT4G00960.1">
    <property type="protein sequence ID" value="AT4G00960.1"/>
    <property type="gene ID" value="AT4G00960"/>
</dbReference>
<dbReference type="GeneID" id="827937"/>
<dbReference type="Gramene" id="AT4G00960.1">
    <property type="protein sequence ID" value="AT4G00960.1"/>
    <property type="gene ID" value="AT4G00960"/>
</dbReference>
<dbReference type="KEGG" id="ath:AT4G00960"/>
<dbReference type="Araport" id="AT4G00960"/>
<dbReference type="TAIR" id="AT4G00960"/>
<dbReference type="eggNOG" id="KOG1187">
    <property type="taxonomic scope" value="Eukaryota"/>
</dbReference>
<dbReference type="HOGENOM" id="CLU_000288_21_3_1"/>
<dbReference type="InParanoid" id="O23082"/>
<dbReference type="OMA" id="ECSISEM"/>
<dbReference type="PhylomeDB" id="O23082"/>
<dbReference type="PRO" id="PR:O23082"/>
<dbReference type="Proteomes" id="UP000006548">
    <property type="component" value="Chromosome 4"/>
</dbReference>
<dbReference type="ExpressionAtlas" id="O23082">
    <property type="expression patterns" value="baseline and differential"/>
</dbReference>
<dbReference type="GO" id="GO:0005524">
    <property type="term" value="F:ATP binding"/>
    <property type="evidence" value="ECO:0007669"/>
    <property type="project" value="UniProtKB-KW"/>
</dbReference>
<dbReference type="GO" id="GO:0106310">
    <property type="term" value="F:protein serine kinase activity"/>
    <property type="evidence" value="ECO:0007669"/>
    <property type="project" value="RHEA"/>
</dbReference>
<dbReference type="GO" id="GO:0004674">
    <property type="term" value="F:protein serine/threonine kinase activity"/>
    <property type="evidence" value="ECO:0007669"/>
    <property type="project" value="UniProtKB-KW"/>
</dbReference>
<dbReference type="CDD" id="cd14066">
    <property type="entry name" value="STKc_IRAK"/>
    <property type="match status" value="1"/>
</dbReference>
<dbReference type="FunFam" id="3.30.200.20:FF:000959">
    <property type="entry name" value="Cysteine-rich receptor-like protein kinase 17"/>
    <property type="match status" value="1"/>
</dbReference>
<dbReference type="FunFam" id="1.10.510.10:FF:001994">
    <property type="entry name" value="Protein kinase superfamily protein"/>
    <property type="match status" value="1"/>
</dbReference>
<dbReference type="Gene3D" id="3.30.200.20">
    <property type="entry name" value="Phosphorylase Kinase, domain 1"/>
    <property type="match status" value="1"/>
</dbReference>
<dbReference type="Gene3D" id="1.10.510.10">
    <property type="entry name" value="Transferase(Phosphotransferase) domain 1"/>
    <property type="match status" value="1"/>
</dbReference>
<dbReference type="InterPro" id="IPR011009">
    <property type="entry name" value="Kinase-like_dom_sf"/>
</dbReference>
<dbReference type="InterPro" id="IPR000719">
    <property type="entry name" value="Prot_kinase_dom"/>
</dbReference>
<dbReference type="InterPro" id="IPR017441">
    <property type="entry name" value="Protein_kinase_ATP_BS"/>
</dbReference>
<dbReference type="InterPro" id="IPR001245">
    <property type="entry name" value="Ser-Thr/Tyr_kinase_cat_dom"/>
</dbReference>
<dbReference type="InterPro" id="IPR008271">
    <property type="entry name" value="Ser/Thr_kinase_AS"/>
</dbReference>
<dbReference type="PANTHER" id="PTHR27002:SF1104">
    <property type="entry name" value="CYSTEINE-RICH RECEPTOR-LIKE PROTEIN KINASE 27-RELATED"/>
    <property type="match status" value="1"/>
</dbReference>
<dbReference type="PANTHER" id="PTHR27002">
    <property type="entry name" value="RECEPTOR-LIKE SERINE/THREONINE-PROTEIN KINASE SD1-8"/>
    <property type="match status" value="1"/>
</dbReference>
<dbReference type="Pfam" id="PF07714">
    <property type="entry name" value="PK_Tyr_Ser-Thr"/>
    <property type="match status" value="1"/>
</dbReference>
<dbReference type="SMART" id="SM00220">
    <property type="entry name" value="S_TKc"/>
    <property type="match status" value="1"/>
</dbReference>
<dbReference type="SUPFAM" id="SSF56112">
    <property type="entry name" value="Protein kinase-like (PK-like)"/>
    <property type="match status" value="1"/>
</dbReference>
<dbReference type="PROSITE" id="PS00107">
    <property type="entry name" value="PROTEIN_KINASE_ATP"/>
    <property type="match status" value="1"/>
</dbReference>
<dbReference type="PROSITE" id="PS50011">
    <property type="entry name" value="PROTEIN_KINASE_DOM"/>
    <property type="match status" value="1"/>
</dbReference>
<dbReference type="PROSITE" id="PS00108">
    <property type="entry name" value="PROTEIN_KINASE_ST"/>
    <property type="match status" value="1"/>
</dbReference>
<reference key="1">
    <citation type="journal article" date="1999" name="Nature">
        <title>Sequence and analysis of chromosome 4 of the plant Arabidopsis thaliana.</title>
        <authorList>
            <person name="Mayer K.F.X."/>
            <person name="Schueller C."/>
            <person name="Wambutt R."/>
            <person name="Murphy G."/>
            <person name="Volckaert G."/>
            <person name="Pohl T."/>
            <person name="Duesterhoeft A."/>
            <person name="Stiekema W."/>
            <person name="Entian K.-D."/>
            <person name="Terryn N."/>
            <person name="Harris B."/>
            <person name="Ansorge W."/>
            <person name="Brandt P."/>
            <person name="Grivell L.A."/>
            <person name="Rieger M."/>
            <person name="Weichselgartner M."/>
            <person name="de Simone V."/>
            <person name="Obermaier B."/>
            <person name="Mache R."/>
            <person name="Mueller M."/>
            <person name="Kreis M."/>
            <person name="Delseny M."/>
            <person name="Puigdomenech P."/>
            <person name="Watson M."/>
            <person name="Schmidtheini T."/>
            <person name="Reichert B."/>
            <person name="Portetelle D."/>
            <person name="Perez-Alonso M."/>
            <person name="Boutry M."/>
            <person name="Bancroft I."/>
            <person name="Vos P."/>
            <person name="Hoheisel J."/>
            <person name="Zimmermann W."/>
            <person name="Wedler H."/>
            <person name="Ridley P."/>
            <person name="Langham S.-A."/>
            <person name="McCullagh B."/>
            <person name="Bilham L."/>
            <person name="Robben J."/>
            <person name="van der Schueren J."/>
            <person name="Grymonprez B."/>
            <person name="Chuang Y.-J."/>
            <person name="Vandenbussche F."/>
            <person name="Braeken M."/>
            <person name="Weltjens I."/>
            <person name="Voet M."/>
            <person name="Bastiaens I."/>
            <person name="Aert R."/>
            <person name="Defoor E."/>
            <person name="Weitzenegger T."/>
            <person name="Bothe G."/>
            <person name="Ramsperger U."/>
            <person name="Hilbert H."/>
            <person name="Braun M."/>
            <person name="Holzer E."/>
            <person name="Brandt A."/>
            <person name="Peters S."/>
            <person name="van Staveren M."/>
            <person name="Dirkse W."/>
            <person name="Mooijman P."/>
            <person name="Klein Lankhorst R."/>
            <person name="Rose M."/>
            <person name="Hauf J."/>
            <person name="Koetter P."/>
            <person name="Berneiser S."/>
            <person name="Hempel S."/>
            <person name="Feldpausch M."/>
            <person name="Lamberth S."/>
            <person name="Van den Daele H."/>
            <person name="De Keyser A."/>
            <person name="Buysshaert C."/>
            <person name="Gielen J."/>
            <person name="Villarroel R."/>
            <person name="De Clercq R."/>
            <person name="van Montagu M."/>
            <person name="Rogers J."/>
            <person name="Cronin A."/>
            <person name="Quail M.A."/>
            <person name="Bray-Allen S."/>
            <person name="Clark L."/>
            <person name="Doggett J."/>
            <person name="Hall S."/>
            <person name="Kay M."/>
            <person name="Lennard N."/>
            <person name="McLay K."/>
            <person name="Mayes R."/>
            <person name="Pettett A."/>
            <person name="Rajandream M.A."/>
            <person name="Lyne M."/>
            <person name="Benes V."/>
            <person name="Rechmann S."/>
            <person name="Borkova D."/>
            <person name="Bloecker H."/>
            <person name="Scharfe M."/>
            <person name="Grimm M."/>
            <person name="Loehnert T.-H."/>
            <person name="Dose S."/>
            <person name="de Haan M."/>
            <person name="Maarse A.C."/>
            <person name="Schaefer M."/>
            <person name="Mueller-Auer S."/>
            <person name="Gabel C."/>
            <person name="Fuchs M."/>
            <person name="Fartmann B."/>
            <person name="Granderath K."/>
            <person name="Dauner D."/>
            <person name="Herzl A."/>
            <person name="Neumann S."/>
            <person name="Argiriou A."/>
            <person name="Vitale D."/>
            <person name="Liguori R."/>
            <person name="Piravandi E."/>
            <person name="Massenet O."/>
            <person name="Quigley F."/>
            <person name="Clabauld G."/>
            <person name="Muendlein A."/>
            <person name="Felber R."/>
            <person name="Schnabl S."/>
            <person name="Hiller R."/>
            <person name="Schmidt W."/>
            <person name="Lecharny A."/>
            <person name="Aubourg S."/>
            <person name="Chefdor F."/>
            <person name="Cooke R."/>
            <person name="Berger C."/>
            <person name="Monfort A."/>
            <person name="Casacuberta E."/>
            <person name="Gibbons T."/>
            <person name="Weber N."/>
            <person name="Vandenbol M."/>
            <person name="Bargues M."/>
            <person name="Terol J."/>
            <person name="Torres A."/>
            <person name="Perez-Perez A."/>
            <person name="Purnelle B."/>
            <person name="Bent E."/>
            <person name="Johnson S."/>
            <person name="Tacon D."/>
            <person name="Jesse T."/>
            <person name="Heijnen L."/>
            <person name="Schwarz S."/>
            <person name="Scholler P."/>
            <person name="Heber S."/>
            <person name="Francs P."/>
            <person name="Bielke C."/>
            <person name="Frishman D."/>
            <person name="Haase D."/>
            <person name="Lemcke K."/>
            <person name="Mewes H.-W."/>
            <person name="Stocker S."/>
            <person name="Zaccaria P."/>
            <person name="Bevan M."/>
            <person name="Wilson R.K."/>
            <person name="de la Bastide M."/>
            <person name="Habermann K."/>
            <person name="Parnell L."/>
            <person name="Dedhia N."/>
            <person name="Gnoj L."/>
            <person name="Schutz K."/>
            <person name="Huang E."/>
            <person name="Spiegel L."/>
            <person name="Sekhon M."/>
            <person name="Murray J."/>
            <person name="Sheet P."/>
            <person name="Cordes M."/>
            <person name="Abu-Threideh J."/>
            <person name="Stoneking T."/>
            <person name="Kalicki J."/>
            <person name="Graves T."/>
            <person name="Harmon G."/>
            <person name="Edwards J."/>
            <person name="Latreille P."/>
            <person name="Courtney L."/>
            <person name="Cloud J."/>
            <person name="Abbott A."/>
            <person name="Scott K."/>
            <person name="Johnson D."/>
            <person name="Minx P."/>
            <person name="Bentley D."/>
            <person name="Fulton B."/>
            <person name="Miller N."/>
            <person name="Greco T."/>
            <person name="Kemp K."/>
            <person name="Kramer J."/>
            <person name="Fulton L."/>
            <person name="Mardis E."/>
            <person name="Dante M."/>
            <person name="Pepin K."/>
            <person name="Hillier L.W."/>
            <person name="Nelson J."/>
            <person name="Spieth J."/>
            <person name="Ryan E."/>
            <person name="Andrews S."/>
            <person name="Geisel C."/>
            <person name="Layman D."/>
            <person name="Du H."/>
            <person name="Ali J."/>
            <person name="Berghoff A."/>
            <person name="Jones K."/>
            <person name="Drone K."/>
            <person name="Cotton M."/>
            <person name="Joshu C."/>
            <person name="Antonoiu B."/>
            <person name="Zidanic M."/>
            <person name="Strong C."/>
            <person name="Sun H."/>
            <person name="Lamar B."/>
            <person name="Yordan C."/>
            <person name="Ma P."/>
            <person name="Zhong J."/>
            <person name="Preston R."/>
            <person name="Vil D."/>
            <person name="Shekher M."/>
            <person name="Matero A."/>
            <person name="Shah R."/>
            <person name="Swaby I.K."/>
            <person name="O'Shaughnessy A."/>
            <person name="Rodriguez M."/>
            <person name="Hoffman J."/>
            <person name="Till S."/>
            <person name="Granat S."/>
            <person name="Shohdy N."/>
            <person name="Hasegawa A."/>
            <person name="Hameed A."/>
            <person name="Lodhi M."/>
            <person name="Johnson A."/>
            <person name="Chen E."/>
            <person name="Marra M.A."/>
            <person name="Martienssen R."/>
            <person name="McCombie W.R."/>
        </authorList>
    </citation>
    <scope>NUCLEOTIDE SEQUENCE [LARGE SCALE GENOMIC DNA]</scope>
    <source>
        <strain>cv. Columbia</strain>
    </source>
</reference>
<reference key="2">
    <citation type="journal article" date="2017" name="Plant J.">
        <title>Araport11: a complete reannotation of the Arabidopsis thaliana reference genome.</title>
        <authorList>
            <person name="Cheng C.Y."/>
            <person name="Krishnakumar V."/>
            <person name="Chan A.P."/>
            <person name="Thibaud-Nissen F."/>
            <person name="Schobel S."/>
            <person name="Town C.D."/>
        </authorList>
    </citation>
    <scope>GENOME REANNOTATION</scope>
    <source>
        <strain>cv. Columbia</strain>
    </source>
</reference>